<comment type="function">
    <text evidence="1">One of the primary rRNA binding proteins, this protein initially binds near the 5'-end of the 23S rRNA. It is important during the early stages of 50S assembly. It makes multiple contacts with different domains of the 23S rRNA in the assembled 50S subunit and ribosome.</text>
</comment>
<comment type="function">
    <text evidence="1">Forms part of the polypeptide exit tunnel.</text>
</comment>
<comment type="subunit">
    <text evidence="1">Part of the 50S ribosomal subunit.</text>
</comment>
<comment type="similarity">
    <text evidence="1">Belongs to the universal ribosomal protein uL4 family.</text>
</comment>
<feature type="chain" id="PRO_0000242398" description="Large ribosomal subunit protein uL4">
    <location>
        <begin position="1"/>
        <end position="214"/>
    </location>
</feature>
<feature type="region of interest" description="Disordered" evidence="2">
    <location>
        <begin position="56"/>
        <end position="86"/>
    </location>
</feature>
<feature type="compositionally biased region" description="Basic residues" evidence="2">
    <location>
        <begin position="71"/>
        <end position="85"/>
    </location>
</feature>
<sequence length="214" mass="24055">MNKISEISIQSQKTENLVKFNANDDLPKSLFEQKEPHFQAIFDSILSERASKRLSTHKVKNRAEVSGTGKKPWKQKSTGKARAGSKRSPIFVGGGRAFGPTTQRNYNLKVNKKVKKLAFISALSQLAQNQQILVNDFSMNKISTKLLVDQLKIFKIDQLRHILIASSDPNLFLSARNLPNVELVKTNSLTVESLIKADLLIISKNEITNLEKRI</sequence>
<proteinExistence type="inferred from homology"/>
<protein>
    <recommendedName>
        <fullName evidence="1">Large ribosomal subunit protein uL4</fullName>
    </recommendedName>
    <alternativeName>
        <fullName evidence="3">50S ribosomal protein L4</fullName>
    </alternativeName>
</protein>
<reference key="1">
    <citation type="journal article" date="2005" name="J. Bacteriol.">
        <title>Swine and poultry pathogens: the complete genome sequences of two strains of Mycoplasma hyopneumoniae and a strain of Mycoplasma synoviae.</title>
        <authorList>
            <person name="Vasconcelos A.T.R."/>
            <person name="Ferreira H.B."/>
            <person name="Bizarro C.V."/>
            <person name="Bonatto S.L."/>
            <person name="Carvalho M.O."/>
            <person name="Pinto P.M."/>
            <person name="Almeida D.F."/>
            <person name="Almeida L.G.P."/>
            <person name="Almeida R."/>
            <person name="Alves-Junior L."/>
            <person name="Assuncao E.N."/>
            <person name="Azevedo V.A.C."/>
            <person name="Bogo M.R."/>
            <person name="Brigido M.M."/>
            <person name="Brocchi M."/>
            <person name="Burity H.A."/>
            <person name="Camargo A.A."/>
            <person name="Camargo S.S."/>
            <person name="Carepo M.S."/>
            <person name="Carraro D.M."/>
            <person name="de Mattos Cascardo J.C."/>
            <person name="Castro L.A."/>
            <person name="Cavalcanti G."/>
            <person name="Chemale G."/>
            <person name="Collevatti R.G."/>
            <person name="Cunha C.W."/>
            <person name="Dallagiovanna B."/>
            <person name="Dambros B.P."/>
            <person name="Dellagostin O.A."/>
            <person name="Falcao C."/>
            <person name="Fantinatti-Garboggini F."/>
            <person name="Felipe M.S.S."/>
            <person name="Fiorentin L."/>
            <person name="Franco G.R."/>
            <person name="Freitas N.S.A."/>
            <person name="Frias D."/>
            <person name="Grangeiro T.B."/>
            <person name="Grisard E.C."/>
            <person name="Guimaraes C.T."/>
            <person name="Hungria M."/>
            <person name="Jardim S.N."/>
            <person name="Krieger M.A."/>
            <person name="Laurino J.P."/>
            <person name="Lima L.F.A."/>
            <person name="Lopes M.I."/>
            <person name="Loreto E.L.S."/>
            <person name="Madeira H.M.F."/>
            <person name="Manfio G.P."/>
            <person name="Maranhao A.Q."/>
            <person name="Martinkovics C.T."/>
            <person name="Medeiros S.R.B."/>
            <person name="Moreira M.A.M."/>
            <person name="Neiva M."/>
            <person name="Ramalho-Neto C.E."/>
            <person name="Nicolas M.F."/>
            <person name="Oliveira S.C."/>
            <person name="Paixao R.F.C."/>
            <person name="Pedrosa F.O."/>
            <person name="Pena S.D.J."/>
            <person name="Pereira M."/>
            <person name="Pereira-Ferrari L."/>
            <person name="Piffer I."/>
            <person name="Pinto L.S."/>
            <person name="Potrich D.P."/>
            <person name="Salim A.C.M."/>
            <person name="Santos F.R."/>
            <person name="Schmitt R."/>
            <person name="Schneider M.P.C."/>
            <person name="Schrank A."/>
            <person name="Schrank I.S."/>
            <person name="Schuck A.F."/>
            <person name="Seuanez H.N."/>
            <person name="Silva D.W."/>
            <person name="Silva R."/>
            <person name="Silva S.C."/>
            <person name="Soares C.M.A."/>
            <person name="Souza K.R.L."/>
            <person name="Souza R.C."/>
            <person name="Staats C.C."/>
            <person name="Steffens M.B.R."/>
            <person name="Teixeira S.M.R."/>
            <person name="Urmenyi T.P."/>
            <person name="Vainstein M.H."/>
            <person name="Zuccherato L.W."/>
            <person name="Simpson A.J.G."/>
            <person name="Zaha A."/>
        </authorList>
    </citation>
    <scope>NUCLEOTIDE SEQUENCE [LARGE SCALE GENOMIC DNA]</scope>
    <source>
        <strain>J / ATCC 25934 / NCTC 10110</strain>
    </source>
</reference>
<gene>
    <name evidence="1" type="primary">rplD</name>
    <name type="ordered locus">MHJ_0189</name>
</gene>
<keyword id="KW-0687">Ribonucleoprotein</keyword>
<keyword id="KW-0689">Ribosomal protein</keyword>
<keyword id="KW-0694">RNA-binding</keyword>
<keyword id="KW-0699">rRNA-binding</keyword>
<organism>
    <name type="scientific">Mesomycoplasma hyopneumoniae (strain J / ATCC 25934 / NCTC 10110)</name>
    <name type="common">Mycoplasma hyopneumoniae</name>
    <dbReference type="NCBI Taxonomy" id="262719"/>
    <lineage>
        <taxon>Bacteria</taxon>
        <taxon>Bacillati</taxon>
        <taxon>Mycoplasmatota</taxon>
        <taxon>Mycoplasmoidales</taxon>
        <taxon>Metamycoplasmataceae</taxon>
        <taxon>Mesomycoplasma</taxon>
    </lineage>
</organism>
<accession>Q4AAE1</accession>
<evidence type="ECO:0000255" key="1">
    <source>
        <dbReference type="HAMAP-Rule" id="MF_01328"/>
    </source>
</evidence>
<evidence type="ECO:0000256" key="2">
    <source>
        <dbReference type="SAM" id="MobiDB-lite"/>
    </source>
</evidence>
<evidence type="ECO:0000305" key="3"/>
<name>RL4_MESHJ</name>
<dbReference type="EMBL" id="AE017243">
    <property type="protein sequence ID" value="AAZ44280.2"/>
    <property type="molecule type" value="Genomic_DNA"/>
</dbReference>
<dbReference type="RefSeq" id="WP_011206025.1">
    <property type="nucleotide sequence ID" value="NC_007295.1"/>
</dbReference>
<dbReference type="SMR" id="Q4AAE1"/>
<dbReference type="GeneID" id="41334492"/>
<dbReference type="KEGG" id="mhj:MHJ_0189"/>
<dbReference type="eggNOG" id="COG0088">
    <property type="taxonomic scope" value="Bacteria"/>
</dbReference>
<dbReference type="HOGENOM" id="CLU_041575_2_1_14"/>
<dbReference type="OrthoDB" id="9803201at2"/>
<dbReference type="Proteomes" id="UP000000548">
    <property type="component" value="Chromosome"/>
</dbReference>
<dbReference type="GO" id="GO:1990904">
    <property type="term" value="C:ribonucleoprotein complex"/>
    <property type="evidence" value="ECO:0007669"/>
    <property type="project" value="UniProtKB-KW"/>
</dbReference>
<dbReference type="GO" id="GO:0005840">
    <property type="term" value="C:ribosome"/>
    <property type="evidence" value="ECO:0007669"/>
    <property type="project" value="UniProtKB-KW"/>
</dbReference>
<dbReference type="GO" id="GO:0019843">
    <property type="term" value="F:rRNA binding"/>
    <property type="evidence" value="ECO:0007669"/>
    <property type="project" value="UniProtKB-UniRule"/>
</dbReference>
<dbReference type="GO" id="GO:0003735">
    <property type="term" value="F:structural constituent of ribosome"/>
    <property type="evidence" value="ECO:0007669"/>
    <property type="project" value="InterPro"/>
</dbReference>
<dbReference type="GO" id="GO:0006412">
    <property type="term" value="P:translation"/>
    <property type="evidence" value="ECO:0007669"/>
    <property type="project" value="UniProtKB-UniRule"/>
</dbReference>
<dbReference type="Gene3D" id="3.40.1370.10">
    <property type="match status" value="1"/>
</dbReference>
<dbReference type="HAMAP" id="MF_01328_B">
    <property type="entry name" value="Ribosomal_uL4_B"/>
    <property type="match status" value="1"/>
</dbReference>
<dbReference type="InterPro" id="IPR002136">
    <property type="entry name" value="Ribosomal_uL4"/>
</dbReference>
<dbReference type="InterPro" id="IPR013005">
    <property type="entry name" value="Ribosomal_uL4-like"/>
</dbReference>
<dbReference type="InterPro" id="IPR023574">
    <property type="entry name" value="Ribosomal_uL4_dom_sf"/>
</dbReference>
<dbReference type="NCBIfam" id="TIGR03953">
    <property type="entry name" value="rplD_bact"/>
    <property type="match status" value="1"/>
</dbReference>
<dbReference type="PANTHER" id="PTHR10746">
    <property type="entry name" value="50S RIBOSOMAL PROTEIN L4"/>
    <property type="match status" value="1"/>
</dbReference>
<dbReference type="PANTHER" id="PTHR10746:SF6">
    <property type="entry name" value="LARGE RIBOSOMAL SUBUNIT PROTEIN UL4M"/>
    <property type="match status" value="1"/>
</dbReference>
<dbReference type="Pfam" id="PF00573">
    <property type="entry name" value="Ribosomal_L4"/>
    <property type="match status" value="1"/>
</dbReference>
<dbReference type="SUPFAM" id="SSF52166">
    <property type="entry name" value="Ribosomal protein L4"/>
    <property type="match status" value="1"/>
</dbReference>